<reference key="1">
    <citation type="journal article" date="2003" name="Proc. Natl. Acad. Sci. U.S.A.">
        <title>Genome sequence of the cyanobacterium Prochlorococcus marinus SS120, a nearly minimal oxyphototrophic genome.</title>
        <authorList>
            <person name="Dufresne A."/>
            <person name="Salanoubat M."/>
            <person name="Partensky F."/>
            <person name="Artiguenave F."/>
            <person name="Axmann I.M."/>
            <person name="Barbe V."/>
            <person name="Duprat S."/>
            <person name="Galperin M.Y."/>
            <person name="Koonin E.V."/>
            <person name="Le Gall F."/>
            <person name="Makarova K.S."/>
            <person name="Ostrowski M."/>
            <person name="Oztas S."/>
            <person name="Robert C."/>
            <person name="Rogozin I.B."/>
            <person name="Scanlan D.J."/>
            <person name="Tandeau de Marsac N."/>
            <person name="Weissenbach J."/>
            <person name="Wincker P."/>
            <person name="Wolf Y.I."/>
            <person name="Hess W.R."/>
        </authorList>
    </citation>
    <scope>NUCLEOTIDE SEQUENCE [LARGE SCALE GENOMIC DNA]</scope>
    <source>
        <strain>SARG / CCMP1375 / SS120</strain>
    </source>
</reference>
<name>MURC_PROMA</name>
<sequence length="472" mass="52654">MTNNPYQIKHFHFIGIGGIGMSGLAMVLRQRGFAVSGSDKSNNPSINNLKDLGINIFKEQAASNISQLSEDKNEQLIIVISSAIRQENEELKEAYEKNLKILHRSDILAFLIKQQYSILIAGSHGKTTTSTIITTILGKANQDPTAIIGGIVPYYNSNAYVGKGKFLIAEADESDGSLTKYDGDIGLLTNIELDHTDYYTNIDSLINTIKKFTKNCKKIVANYDCNNLRKACPDKTIWWSTNEFKNINFAAIPKIMNGQITLASYYENGKYIDDISISLPGVHNLNNTLGAIAACRSADINFSDIKPHVSSLKCPERRFQFKGIWKGRQIVDDYAHHPSEIRETLSMARLMINTKKSILPMAADRIVVIFQPHRYSRTRDLITEFAKNLGAADLVILTPIYSAGEEPIKGITSEKLKSCTLANNPNLPIFTCKQLRDLENIINLKTRENDLLLFMGAGDITKVSEKLSKKIK</sequence>
<organism>
    <name type="scientific">Prochlorococcus marinus (strain SARG / CCMP1375 / SS120)</name>
    <dbReference type="NCBI Taxonomy" id="167539"/>
    <lineage>
        <taxon>Bacteria</taxon>
        <taxon>Bacillati</taxon>
        <taxon>Cyanobacteriota</taxon>
        <taxon>Cyanophyceae</taxon>
        <taxon>Synechococcales</taxon>
        <taxon>Prochlorococcaceae</taxon>
        <taxon>Prochlorococcus</taxon>
    </lineage>
</organism>
<proteinExistence type="inferred from homology"/>
<evidence type="ECO:0000255" key="1">
    <source>
        <dbReference type="HAMAP-Rule" id="MF_00046"/>
    </source>
</evidence>
<accession>Q7VEJ1</accession>
<gene>
    <name evidence="1" type="primary">murC</name>
    <name type="ordered locus">Pro_0022</name>
</gene>
<feature type="chain" id="PRO_0000182131" description="UDP-N-acetylmuramate--L-alanine ligase">
    <location>
        <begin position="1"/>
        <end position="472"/>
    </location>
</feature>
<feature type="binding site" evidence="1">
    <location>
        <begin position="122"/>
        <end position="128"/>
    </location>
    <ligand>
        <name>ATP</name>
        <dbReference type="ChEBI" id="CHEBI:30616"/>
    </ligand>
</feature>
<keyword id="KW-0067">ATP-binding</keyword>
<keyword id="KW-0131">Cell cycle</keyword>
<keyword id="KW-0132">Cell division</keyword>
<keyword id="KW-0133">Cell shape</keyword>
<keyword id="KW-0961">Cell wall biogenesis/degradation</keyword>
<keyword id="KW-0963">Cytoplasm</keyword>
<keyword id="KW-0436">Ligase</keyword>
<keyword id="KW-0547">Nucleotide-binding</keyword>
<keyword id="KW-0573">Peptidoglycan synthesis</keyword>
<keyword id="KW-1185">Reference proteome</keyword>
<dbReference type="EC" id="6.3.2.8" evidence="1"/>
<dbReference type="EMBL" id="AE017126">
    <property type="protein sequence ID" value="AAP99068.1"/>
    <property type="molecule type" value="Genomic_DNA"/>
</dbReference>
<dbReference type="RefSeq" id="NP_874416.1">
    <property type="nucleotide sequence ID" value="NC_005042.1"/>
</dbReference>
<dbReference type="RefSeq" id="WP_011124177.1">
    <property type="nucleotide sequence ID" value="NC_005042.1"/>
</dbReference>
<dbReference type="SMR" id="Q7VEJ1"/>
<dbReference type="STRING" id="167539.Pro_0022"/>
<dbReference type="EnsemblBacteria" id="AAP99068">
    <property type="protein sequence ID" value="AAP99068"/>
    <property type="gene ID" value="Pro_0022"/>
</dbReference>
<dbReference type="KEGG" id="pma:Pro_0022"/>
<dbReference type="PATRIC" id="fig|167539.5.peg.22"/>
<dbReference type="eggNOG" id="COG0773">
    <property type="taxonomic scope" value="Bacteria"/>
</dbReference>
<dbReference type="HOGENOM" id="CLU_028104_2_2_3"/>
<dbReference type="OrthoDB" id="9804126at2"/>
<dbReference type="UniPathway" id="UPA00219"/>
<dbReference type="Proteomes" id="UP000001420">
    <property type="component" value="Chromosome"/>
</dbReference>
<dbReference type="GO" id="GO:0005737">
    <property type="term" value="C:cytoplasm"/>
    <property type="evidence" value="ECO:0007669"/>
    <property type="project" value="UniProtKB-SubCell"/>
</dbReference>
<dbReference type="GO" id="GO:0005524">
    <property type="term" value="F:ATP binding"/>
    <property type="evidence" value="ECO:0007669"/>
    <property type="project" value="UniProtKB-UniRule"/>
</dbReference>
<dbReference type="GO" id="GO:0008763">
    <property type="term" value="F:UDP-N-acetylmuramate-L-alanine ligase activity"/>
    <property type="evidence" value="ECO:0007669"/>
    <property type="project" value="UniProtKB-UniRule"/>
</dbReference>
<dbReference type="GO" id="GO:0051301">
    <property type="term" value="P:cell division"/>
    <property type="evidence" value="ECO:0007669"/>
    <property type="project" value="UniProtKB-KW"/>
</dbReference>
<dbReference type="GO" id="GO:0071555">
    <property type="term" value="P:cell wall organization"/>
    <property type="evidence" value="ECO:0007669"/>
    <property type="project" value="UniProtKB-KW"/>
</dbReference>
<dbReference type="GO" id="GO:0009252">
    <property type="term" value="P:peptidoglycan biosynthetic process"/>
    <property type="evidence" value="ECO:0007669"/>
    <property type="project" value="UniProtKB-UniRule"/>
</dbReference>
<dbReference type="GO" id="GO:0008360">
    <property type="term" value="P:regulation of cell shape"/>
    <property type="evidence" value="ECO:0007669"/>
    <property type="project" value="UniProtKB-KW"/>
</dbReference>
<dbReference type="Gene3D" id="3.90.190.20">
    <property type="entry name" value="Mur ligase, C-terminal domain"/>
    <property type="match status" value="1"/>
</dbReference>
<dbReference type="Gene3D" id="3.40.1190.10">
    <property type="entry name" value="Mur-like, catalytic domain"/>
    <property type="match status" value="1"/>
</dbReference>
<dbReference type="Gene3D" id="3.40.50.720">
    <property type="entry name" value="NAD(P)-binding Rossmann-like Domain"/>
    <property type="match status" value="1"/>
</dbReference>
<dbReference type="HAMAP" id="MF_00046">
    <property type="entry name" value="MurC"/>
    <property type="match status" value="1"/>
</dbReference>
<dbReference type="InterPro" id="IPR036565">
    <property type="entry name" value="Mur-like_cat_sf"/>
</dbReference>
<dbReference type="InterPro" id="IPR004101">
    <property type="entry name" value="Mur_ligase_C"/>
</dbReference>
<dbReference type="InterPro" id="IPR036615">
    <property type="entry name" value="Mur_ligase_C_dom_sf"/>
</dbReference>
<dbReference type="InterPro" id="IPR013221">
    <property type="entry name" value="Mur_ligase_cen"/>
</dbReference>
<dbReference type="InterPro" id="IPR000713">
    <property type="entry name" value="Mur_ligase_N"/>
</dbReference>
<dbReference type="InterPro" id="IPR050061">
    <property type="entry name" value="MurCDEF_pg_biosynth"/>
</dbReference>
<dbReference type="InterPro" id="IPR005758">
    <property type="entry name" value="UDP-N-AcMur_Ala_ligase_MurC"/>
</dbReference>
<dbReference type="NCBIfam" id="TIGR01082">
    <property type="entry name" value="murC"/>
    <property type="match status" value="1"/>
</dbReference>
<dbReference type="PANTHER" id="PTHR43445:SF3">
    <property type="entry name" value="UDP-N-ACETYLMURAMATE--L-ALANINE LIGASE"/>
    <property type="match status" value="1"/>
</dbReference>
<dbReference type="PANTHER" id="PTHR43445">
    <property type="entry name" value="UDP-N-ACETYLMURAMATE--L-ALANINE LIGASE-RELATED"/>
    <property type="match status" value="1"/>
</dbReference>
<dbReference type="Pfam" id="PF01225">
    <property type="entry name" value="Mur_ligase"/>
    <property type="match status" value="1"/>
</dbReference>
<dbReference type="Pfam" id="PF02875">
    <property type="entry name" value="Mur_ligase_C"/>
    <property type="match status" value="1"/>
</dbReference>
<dbReference type="Pfam" id="PF08245">
    <property type="entry name" value="Mur_ligase_M"/>
    <property type="match status" value="1"/>
</dbReference>
<dbReference type="SUPFAM" id="SSF51984">
    <property type="entry name" value="MurCD N-terminal domain"/>
    <property type="match status" value="1"/>
</dbReference>
<dbReference type="SUPFAM" id="SSF53623">
    <property type="entry name" value="MurD-like peptide ligases, catalytic domain"/>
    <property type="match status" value="1"/>
</dbReference>
<dbReference type="SUPFAM" id="SSF53244">
    <property type="entry name" value="MurD-like peptide ligases, peptide-binding domain"/>
    <property type="match status" value="1"/>
</dbReference>
<comment type="function">
    <text evidence="1">Cell wall formation.</text>
</comment>
<comment type="catalytic activity">
    <reaction evidence="1">
        <text>UDP-N-acetyl-alpha-D-muramate + L-alanine + ATP = UDP-N-acetyl-alpha-D-muramoyl-L-alanine + ADP + phosphate + H(+)</text>
        <dbReference type="Rhea" id="RHEA:23372"/>
        <dbReference type="ChEBI" id="CHEBI:15378"/>
        <dbReference type="ChEBI" id="CHEBI:30616"/>
        <dbReference type="ChEBI" id="CHEBI:43474"/>
        <dbReference type="ChEBI" id="CHEBI:57972"/>
        <dbReference type="ChEBI" id="CHEBI:70757"/>
        <dbReference type="ChEBI" id="CHEBI:83898"/>
        <dbReference type="ChEBI" id="CHEBI:456216"/>
        <dbReference type="EC" id="6.3.2.8"/>
    </reaction>
</comment>
<comment type="pathway">
    <text evidence="1">Cell wall biogenesis; peptidoglycan biosynthesis.</text>
</comment>
<comment type="subcellular location">
    <subcellularLocation>
        <location evidence="1">Cytoplasm</location>
    </subcellularLocation>
</comment>
<comment type="similarity">
    <text evidence="1">Belongs to the MurCDEF family.</text>
</comment>
<protein>
    <recommendedName>
        <fullName evidence="1">UDP-N-acetylmuramate--L-alanine ligase</fullName>
        <ecNumber evidence="1">6.3.2.8</ecNumber>
    </recommendedName>
    <alternativeName>
        <fullName evidence="1">UDP-N-acetylmuramoyl-L-alanine synthetase</fullName>
    </alternativeName>
</protein>